<sequence length="89" mass="10378">MAAQIPESDQIKQFKEFLGTYNKLTETCFLDCVKDFTTREVKPEETTCSEHCLQKYLKMTQRISMRFQEYHIQQNEALAAKAGLLGQPR</sequence>
<comment type="function">
    <text evidence="1">Mitochondrial intermembrane chaperone that participates in the import and insertion of multi-pass transmembrane proteins into the mitochondrial inner membrane. May also be required for the transfer of beta-barrel precursors from the TOM complex to the sorting and assembly machinery (SAM complex) of the outer membrane. Acts as a chaperone-like protein that protects the hydrophobic precursors from aggregation and guide them through the mitochondrial intermembrane space (By similarity).</text>
</comment>
<comment type="subunit">
    <text evidence="1">Heterohexamer; composed of 3 copies of TIMM9 and 3 copies of TIMM10/TIM10A, named soluble 70 kDa complex. The complex forms a 6-bladed alpha-propeller structure and associates with the TIMM22 component of the TIM22 complex. Interacts with multi-pass transmembrane proteins in transit. Also forms a complex composed of TIMM9, TIMM10/TIM10A and FXC1/TIM10B (By similarity).</text>
</comment>
<comment type="subcellular location">
    <subcellularLocation>
        <location evidence="1">Mitochondrion inner membrane</location>
        <topology evidence="1">Peripheral membrane protein</topology>
        <orientation evidence="1">Intermembrane side</orientation>
    </subcellularLocation>
</comment>
<comment type="domain">
    <text evidence="3">The twin CX3C motif contains 4 conserved Cys residues that form 2 disulfide bonds in the mitochondrial intermembrane space. However, during the transit of TIMM9 from cytoplasm into mitochondrion, the Cys residues probably coordinate zinc, thereby preventing folding and allowing its transfer across mitochondrial outer membrane (Probable).</text>
</comment>
<comment type="similarity">
    <text evidence="3">Belongs to the small Tim family.</text>
</comment>
<accession>Q2KIV2</accession>
<name>TIM9_BOVIN</name>
<feature type="initiator methionine" description="Removed" evidence="2">
    <location>
        <position position="1"/>
    </location>
</feature>
<feature type="chain" id="PRO_0000244411" description="Mitochondrial import inner membrane translocase subunit Tim9">
    <location>
        <begin position="2"/>
        <end position="89"/>
    </location>
</feature>
<feature type="short sequence motif" description="Twin CX3C motif">
    <location>
        <begin position="28"/>
        <end position="52"/>
    </location>
</feature>
<feature type="modified residue" description="N-acetylalanine" evidence="2">
    <location>
        <position position="2"/>
    </location>
</feature>
<feature type="disulfide bond" evidence="1">
    <location>
        <begin position="28"/>
        <end position="52"/>
    </location>
</feature>
<feature type="disulfide bond" evidence="1">
    <location>
        <begin position="32"/>
        <end position="48"/>
    </location>
</feature>
<reference key="1">
    <citation type="submission" date="2006-01" db="EMBL/GenBank/DDBJ databases">
        <authorList>
            <consortium name="NIH - Mammalian Gene Collection (MGC) project"/>
        </authorList>
    </citation>
    <scope>NUCLEOTIDE SEQUENCE [LARGE SCALE MRNA]</scope>
    <source>
        <strain>Hereford</strain>
        <tissue>Testis</tissue>
    </source>
</reference>
<protein>
    <recommendedName>
        <fullName>Mitochondrial import inner membrane translocase subunit Tim9</fullName>
    </recommendedName>
</protein>
<proteinExistence type="inferred from homology"/>
<evidence type="ECO:0000250" key="1"/>
<evidence type="ECO:0000250" key="2">
    <source>
        <dbReference type="UniProtKB" id="Q9Y5J7"/>
    </source>
</evidence>
<evidence type="ECO:0000305" key="3"/>
<dbReference type="EMBL" id="BC112498">
    <property type="protein sequence ID" value="AAI12499.1"/>
    <property type="molecule type" value="mRNA"/>
</dbReference>
<dbReference type="RefSeq" id="NP_001039719.1">
    <property type="nucleotide sequence ID" value="NM_001046254.1"/>
</dbReference>
<dbReference type="RefSeq" id="XP_010807645.1">
    <property type="nucleotide sequence ID" value="XM_010809343.4"/>
</dbReference>
<dbReference type="RefSeq" id="XP_010807646.1">
    <property type="nucleotide sequence ID" value="XM_010809344.4"/>
</dbReference>
<dbReference type="SMR" id="Q2KIV2"/>
<dbReference type="FunCoup" id="Q2KIV2">
    <property type="interactions" value="2926"/>
</dbReference>
<dbReference type="STRING" id="9913.ENSBTAP00000062164"/>
<dbReference type="PaxDb" id="9913-ENSBTAP00000013873"/>
<dbReference type="Ensembl" id="ENSBTAT00000013873.6">
    <property type="protein sequence ID" value="ENSBTAP00000013873.5"/>
    <property type="gene ID" value="ENSBTAG00000010503.7"/>
</dbReference>
<dbReference type="GeneID" id="521073"/>
<dbReference type="KEGG" id="bta:521073"/>
<dbReference type="CTD" id="26520"/>
<dbReference type="VEuPathDB" id="HostDB:ENSBTAG00000010503"/>
<dbReference type="VGNC" id="VGNC:55149">
    <property type="gene designation" value="TIMM9"/>
</dbReference>
<dbReference type="eggNOG" id="KOG3479">
    <property type="taxonomic scope" value="Eukaryota"/>
</dbReference>
<dbReference type="GeneTree" id="ENSGT00940000165313"/>
<dbReference type="HOGENOM" id="CLU_141397_3_3_1"/>
<dbReference type="InParanoid" id="Q2KIV2"/>
<dbReference type="OMA" id="QDFLRMY"/>
<dbReference type="OrthoDB" id="1551503at2759"/>
<dbReference type="TreeFam" id="TF106192"/>
<dbReference type="Reactome" id="R-BTA-1268020">
    <property type="pathway name" value="Mitochondrial protein import"/>
</dbReference>
<dbReference type="Proteomes" id="UP000009136">
    <property type="component" value="Chromosome 10"/>
</dbReference>
<dbReference type="Bgee" id="ENSBTAG00000010503">
    <property type="expression patterns" value="Expressed in oocyte and 105 other cell types or tissues"/>
</dbReference>
<dbReference type="GO" id="GO:0042719">
    <property type="term" value="C:mitochondrial intermembrane space protein transporter complex"/>
    <property type="evidence" value="ECO:0007669"/>
    <property type="project" value="Ensembl"/>
</dbReference>
<dbReference type="GO" id="GO:0042721">
    <property type="term" value="C:TIM22 mitochondrial import inner membrane insertion complex"/>
    <property type="evidence" value="ECO:0007669"/>
    <property type="project" value="Ensembl"/>
</dbReference>
<dbReference type="GO" id="GO:0032977">
    <property type="term" value="F:membrane insertase activity"/>
    <property type="evidence" value="ECO:0007669"/>
    <property type="project" value="Ensembl"/>
</dbReference>
<dbReference type="GO" id="GO:0046872">
    <property type="term" value="F:metal ion binding"/>
    <property type="evidence" value="ECO:0007669"/>
    <property type="project" value="UniProtKB-KW"/>
</dbReference>
<dbReference type="GO" id="GO:0042803">
    <property type="term" value="F:protein homodimerization activity"/>
    <property type="evidence" value="ECO:0007669"/>
    <property type="project" value="Ensembl"/>
</dbReference>
<dbReference type="GO" id="GO:0051087">
    <property type="term" value="F:protein-folding chaperone binding"/>
    <property type="evidence" value="ECO:0007669"/>
    <property type="project" value="Ensembl"/>
</dbReference>
<dbReference type="GO" id="GO:0045039">
    <property type="term" value="P:protein insertion into mitochondrial inner membrane"/>
    <property type="evidence" value="ECO:0007669"/>
    <property type="project" value="Ensembl"/>
</dbReference>
<dbReference type="FunFam" id="1.10.287.810:FF:000004">
    <property type="entry name" value="Mitochondrial import inner membrane translocase subunit Tim9"/>
    <property type="match status" value="1"/>
</dbReference>
<dbReference type="Gene3D" id="1.10.287.810">
    <property type="entry name" value="Mitochondrial import inner membrane translocase subunit tim13 like domains"/>
    <property type="match status" value="1"/>
</dbReference>
<dbReference type="InterPro" id="IPR050673">
    <property type="entry name" value="Mito_inner_translocase_sub"/>
</dbReference>
<dbReference type="InterPro" id="IPR004217">
    <property type="entry name" value="Tim10-like"/>
</dbReference>
<dbReference type="InterPro" id="IPR035427">
    <property type="entry name" value="Tim10-like_dom_sf"/>
</dbReference>
<dbReference type="PANTHER" id="PTHR13172">
    <property type="entry name" value="MITOCHONDRIAL IMPORT INNER MEMBRANE TRANSLOCASE SUBUNIT TIM9B"/>
    <property type="match status" value="1"/>
</dbReference>
<dbReference type="Pfam" id="PF02953">
    <property type="entry name" value="zf-Tim10_DDP"/>
    <property type="match status" value="1"/>
</dbReference>
<dbReference type="SUPFAM" id="SSF144122">
    <property type="entry name" value="Tim10-like"/>
    <property type="match status" value="1"/>
</dbReference>
<gene>
    <name type="primary">TIMM9</name>
</gene>
<organism>
    <name type="scientific">Bos taurus</name>
    <name type="common">Bovine</name>
    <dbReference type="NCBI Taxonomy" id="9913"/>
    <lineage>
        <taxon>Eukaryota</taxon>
        <taxon>Metazoa</taxon>
        <taxon>Chordata</taxon>
        <taxon>Craniata</taxon>
        <taxon>Vertebrata</taxon>
        <taxon>Euteleostomi</taxon>
        <taxon>Mammalia</taxon>
        <taxon>Eutheria</taxon>
        <taxon>Laurasiatheria</taxon>
        <taxon>Artiodactyla</taxon>
        <taxon>Ruminantia</taxon>
        <taxon>Pecora</taxon>
        <taxon>Bovidae</taxon>
        <taxon>Bovinae</taxon>
        <taxon>Bos</taxon>
    </lineage>
</organism>
<keyword id="KW-0007">Acetylation</keyword>
<keyword id="KW-0143">Chaperone</keyword>
<keyword id="KW-1015">Disulfide bond</keyword>
<keyword id="KW-0472">Membrane</keyword>
<keyword id="KW-0479">Metal-binding</keyword>
<keyword id="KW-0496">Mitochondrion</keyword>
<keyword id="KW-0999">Mitochondrion inner membrane</keyword>
<keyword id="KW-0653">Protein transport</keyword>
<keyword id="KW-1185">Reference proteome</keyword>
<keyword id="KW-0811">Translocation</keyword>
<keyword id="KW-0813">Transport</keyword>
<keyword id="KW-0862">Zinc</keyword>